<keyword id="KW-0325">Glycoprotein</keyword>
<keyword id="KW-0646">Protease inhibitor</keyword>
<keyword id="KW-0654">Proteoglycan</keyword>
<keyword id="KW-1185">Reference proteome</keyword>
<keyword id="KW-0964">Secreted</keyword>
<keyword id="KW-0722">Serine protease inhibitor</keyword>
<keyword id="KW-0732">Signal</keyword>
<sequence length="876" mass="98410">MVALSHLGSALQLGSLWGFPRSPFRLLGKRSLPEGVANGIEVYSTKINSKVTSRFAHNVVTTRVVNHADTAKEVSFDVELPKTAFITNFTLTIDGVIYPGNVKEKEVAKKQYEKAVSQGKTAGLVKASGRKLEKFTVSVNVAAGSKVTFELTYEELLKRHKGKYEMYLKVQPKQLVKHFEIEVDIFEPQGISMLDAEASFITNDLLGSALTKSFSGKKGHVSFKPSLDQQRPCPTCTDSLLNGDFTITYDVNRESPGNVQIVNGYFVHFFAPQGLPVVPKNVAFVIDISGSMAGRKLEQTKEALLRILEDMKKEDYLNFILFSGDVSTWKEHLVQATPENLQEARTFVKSMEDKGMTNINDGLLRGISMLNKAREEHRVPERSTSIVIMLTDGDANVGESRPEKIQENVRNAIGGKFPLYNLGFGNNLNYNFLENMALENHGFARRIYEDSDADLQLQGFYEEVANPLLTGVEVEYPENAILDLTQNTYQHFYDGSEIVVAGRLVDEDMNSFKADVKGHGATNDLTFTEEVDMKEMEKALQERDYIFGNYIERLWAYLTIEQLLEKRKNAHGEEKENLTARALDLSLKYHFVTPLTSMVVTKPEDNEDERAIADKPGEDAEASYQPPQNPYYYVDGDPHFIIQVPEKDDALCFNIDEAPGTVLRLIQDPVTGLTVNGQIIGDKRGSPDSKTKKTYFGKLGIANAQMDFQVEVTTEKVTLWNRAVQSTFSWLDTVTVMQDGLSMMINRKNMVVSFGDGVTFVVVLHQVWKKHPVHRDFLGFYVVDSHRMSAQTHGLLGQFFQPFDFKVSDIRPGSDPTKPDATLLVKNHQLIVTRGSQKDYRKDASIGTKVVRWFVYNNGEGLIDGVHTDYIVPNLF</sequence>
<protein>
    <recommendedName>
        <fullName>Inter-alpha-trypsin inhibitor heavy chain H3</fullName>
        <shortName>ITI heavy chain H3</shortName>
        <shortName>ITI-HC3</shortName>
        <shortName>Inter-alpha-inhibitor heavy chain 3</shortName>
    </recommendedName>
</protein>
<accession>Q5RB37</accession>
<proteinExistence type="evidence at transcript level"/>
<reference key="1">
    <citation type="submission" date="2004-11" db="EMBL/GenBank/DDBJ databases">
        <authorList>
            <consortium name="The German cDNA consortium"/>
        </authorList>
    </citation>
    <scope>NUCLEOTIDE SEQUENCE [LARGE SCALE MRNA]</scope>
    <source>
        <tissue>Liver</tissue>
    </source>
</reference>
<organism>
    <name type="scientific">Pongo abelii</name>
    <name type="common">Sumatran orangutan</name>
    <name type="synonym">Pongo pygmaeus abelii</name>
    <dbReference type="NCBI Taxonomy" id="9601"/>
    <lineage>
        <taxon>Eukaryota</taxon>
        <taxon>Metazoa</taxon>
        <taxon>Chordata</taxon>
        <taxon>Craniata</taxon>
        <taxon>Vertebrata</taxon>
        <taxon>Euteleostomi</taxon>
        <taxon>Mammalia</taxon>
        <taxon>Eutheria</taxon>
        <taxon>Euarchontoglires</taxon>
        <taxon>Primates</taxon>
        <taxon>Haplorrhini</taxon>
        <taxon>Catarrhini</taxon>
        <taxon>Hominidae</taxon>
        <taxon>Pongo</taxon>
    </lineage>
</organism>
<name>ITIH3_PONAB</name>
<comment type="function">
    <text evidence="1">May act as a carrier of hyaluronan in serum or as a binding protein between hyaluronan and other matrix protein, including those on cell surfaces in tissues to regulate the localization, synthesis and degradation of hyaluronan which are essential to cells undergoing biological processes.</text>
</comment>
<comment type="subunit">
    <text evidence="2">I-alpha-I plasma protease inhibitors are assembled from one or two heavy chains (HC) and one light chain, bikunin. Pre-alpha-inhibitor (P-alpha-I) is composed of ITIH3/HC3 and bikunin.</text>
</comment>
<comment type="subcellular location">
    <subcellularLocation>
        <location evidence="1">Secreted</location>
    </subcellularLocation>
</comment>
<comment type="PTM">
    <text evidence="1">Heavy chains are linked to bikunin via chondroitin 4-sulfate esterified to the alpha-carboxyl of the C-terminal aspartate after propeptide cleavage.</text>
</comment>
<comment type="similarity">
    <text evidence="6">Belongs to the ITIH family.</text>
</comment>
<dbReference type="EMBL" id="CR858818">
    <property type="protein sequence ID" value="CAH91023.1"/>
    <property type="molecule type" value="mRNA"/>
</dbReference>
<dbReference type="RefSeq" id="NP_001125590.1">
    <property type="nucleotide sequence ID" value="NM_001132118.1"/>
</dbReference>
<dbReference type="SMR" id="Q5RB37"/>
<dbReference type="FunCoup" id="Q5RB37">
    <property type="interactions" value="104"/>
</dbReference>
<dbReference type="STRING" id="9601.ENSPPYP00000015436"/>
<dbReference type="GlyCosmos" id="Q5RB37">
    <property type="glycosylation" value="2 sites, No reported glycans"/>
</dbReference>
<dbReference type="GeneID" id="100172506"/>
<dbReference type="KEGG" id="pon:100172506"/>
<dbReference type="CTD" id="3699"/>
<dbReference type="eggNOG" id="ENOG502QPS2">
    <property type="taxonomic scope" value="Eukaryota"/>
</dbReference>
<dbReference type="InParanoid" id="Q5RB37"/>
<dbReference type="OrthoDB" id="299997at2759"/>
<dbReference type="Proteomes" id="UP000001595">
    <property type="component" value="Unplaced"/>
</dbReference>
<dbReference type="GO" id="GO:0005576">
    <property type="term" value="C:extracellular region"/>
    <property type="evidence" value="ECO:0007669"/>
    <property type="project" value="UniProtKB-SubCell"/>
</dbReference>
<dbReference type="GO" id="GO:0004867">
    <property type="term" value="F:serine-type endopeptidase inhibitor activity"/>
    <property type="evidence" value="ECO:0007669"/>
    <property type="project" value="UniProtKB-KW"/>
</dbReference>
<dbReference type="GO" id="GO:0030212">
    <property type="term" value="P:hyaluronan metabolic process"/>
    <property type="evidence" value="ECO:0007669"/>
    <property type="project" value="InterPro"/>
</dbReference>
<dbReference type="CDD" id="cd01461">
    <property type="entry name" value="vWA_interalpha_trypsin_inhibitor"/>
    <property type="match status" value="1"/>
</dbReference>
<dbReference type="FunFam" id="3.40.50.410:FF:000013">
    <property type="entry name" value="inter-alpha-trypsin inhibitor heavy chain H2"/>
    <property type="match status" value="1"/>
</dbReference>
<dbReference type="Gene3D" id="3.40.50.410">
    <property type="entry name" value="von Willebrand factor, type A domain"/>
    <property type="match status" value="1"/>
</dbReference>
<dbReference type="InterPro" id="IPR010600">
    <property type="entry name" value="ITI_HC_C"/>
</dbReference>
<dbReference type="InterPro" id="IPR050934">
    <property type="entry name" value="ITIH"/>
</dbReference>
<dbReference type="InterPro" id="IPR013694">
    <property type="entry name" value="VIT"/>
</dbReference>
<dbReference type="InterPro" id="IPR002035">
    <property type="entry name" value="VWF_A"/>
</dbReference>
<dbReference type="InterPro" id="IPR036465">
    <property type="entry name" value="vWFA_dom_sf"/>
</dbReference>
<dbReference type="PANTHER" id="PTHR10338">
    <property type="entry name" value="INTER-ALPHA-TRYPSIN INHIBITOR HEAVY CHAIN FAMILY MEMBER"/>
    <property type="match status" value="1"/>
</dbReference>
<dbReference type="PANTHER" id="PTHR10338:SF115">
    <property type="entry name" value="INTER-ALPHA-TRYPSIN INHIBITOR HEAVY CHAIN H3"/>
    <property type="match status" value="1"/>
</dbReference>
<dbReference type="Pfam" id="PF06668">
    <property type="entry name" value="ITI_HC_C"/>
    <property type="match status" value="1"/>
</dbReference>
<dbReference type="Pfam" id="PF08487">
    <property type="entry name" value="VIT"/>
    <property type="match status" value="1"/>
</dbReference>
<dbReference type="Pfam" id="PF00092">
    <property type="entry name" value="VWA"/>
    <property type="match status" value="1"/>
</dbReference>
<dbReference type="SMART" id="SM00609">
    <property type="entry name" value="VIT"/>
    <property type="match status" value="1"/>
</dbReference>
<dbReference type="SMART" id="SM00327">
    <property type="entry name" value="VWA"/>
    <property type="match status" value="1"/>
</dbReference>
<dbReference type="SUPFAM" id="SSF53300">
    <property type="entry name" value="vWA-like"/>
    <property type="match status" value="1"/>
</dbReference>
<dbReference type="PROSITE" id="PS51468">
    <property type="entry name" value="VIT"/>
    <property type="match status" value="1"/>
</dbReference>
<dbReference type="PROSITE" id="PS50234">
    <property type="entry name" value="VWFA"/>
    <property type="match status" value="1"/>
</dbReference>
<feature type="signal peptide" evidence="3">
    <location>
        <begin position="1"/>
        <end position="18"/>
    </location>
</feature>
<feature type="propeptide" id="PRO_0000312439" evidence="1">
    <location>
        <begin position="19"/>
        <end position="31"/>
    </location>
</feature>
<feature type="chain" id="PRO_0000312440" description="Inter-alpha-trypsin inhibitor heavy chain H3">
    <location>
        <begin position="32"/>
        <end position="637"/>
    </location>
</feature>
<feature type="propeptide" id="PRO_0000312441" evidence="1">
    <location>
        <begin position="638"/>
        <end position="876"/>
    </location>
</feature>
<feature type="domain" description="VIT" evidence="5">
    <location>
        <begin position="26"/>
        <end position="155"/>
    </location>
</feature>
<feature type="domain" description="VWFA" evidence="4">
    <location>
        <begin position="281"/>
        <end position="464"/>
    </location>
</feature>
<feature type="modified residue" description="Aspartate 1-(chondroitin 4-sulfate)-ester" evidence="1">
    <location>
        <position position="637"/>
    </location>
</feature>
<feature type="glycosylation site" description="N-linked (GlcNAc...) asparagine" evidence="3">
    <location>
        <position position="88"/>
    </location>
</feature>
<feature type="glycosylation site" description="N-linked (GlcNAc...) asparagine" evidence="3">
    <location>
        <position position="577"/>
    </location>
</feature>
<evidence type="ECO:0000250" key="1"/>
<evidence type="ECO:0000250" key="2">
    <source>
        <dbReference type="UniProtKB" id="Q06033"/>
    </source>
</evidence>
<evidence type="ECO:0000255" key="3"/>
<evidence type="ECO:0000255" key="4">
    <source>
        <dbReference type="PROSITE-ProRule" id="PRU00219"/>
    </source>
</evidence>
<evidence type="ECO:0000255" key="5">
    <source>
        <dbReference type="PROSITE-ProRule" id="PRU00801"/>
    </source>
</evidence>
<evidence type="ECO:0000305" key="6"/>
<gene>
    <name type="primary">ITIH3</name>
</gene>